<gene>
    <name evidence="1" type="primary">cbpA</name>
    <name type="ordered locus">SPC_2637</name>
</gene>
<keyword id="KW-0143">Chaperone</keyword>
<keyword id="KW-0963">Cytoplasm</keyword>
<keyword id="KW-0238">DNA-binding</keyword>
<evidence type="ECO:0000255" key="1">
    <source>
        <dbReference type="HAMAP-Rule" id="MF_01154"/>
    </source>
</evidence>
<proteinExistence type="inferred from homology"/>
<organism>
    <name type="scientific">Salmonella paratyphi C (strain RKS4594)</name>
    <dbReference type="NCBI Taxonomy" id="476213"/>
    <lineage>
        <taxon>Bacteria</taxon>
        <taxon>Pseudomonadati</taxon>
        <taxon>Pseudomonadota</taxon>
        <taxon>Gammaproteobacteria</taxon>
        <taxon>Enterobacterales</taxon>
        <taxon>Enterobacteriaceae</taxon>
        <taxon>Salmonella</taxon>
    </lineage>
</organism>
<reference key="1">
    <citation type="journal article" date="2009" name="PLoS ONE">
        <title>Salmonella paratyphi C: genetic divergence from Salmonella choleraesuis and pathogenic convergence with Salmonella typhi.</title>
        <authorList>
            <person name="Liu W.-Q."/>
            <person name="Feng Y."/>
            <person name="Wang Y."/>
            <person name="Zou Q.-H."/>
            <person name="Chen F."/>
            <person name="Guo J.-T."/>
            <person name="Peng Y.-H."/>
            <person name="Jin Y."/>
            <person name="Li Y.-G."/>
            <person name="Hu S.-N."/>
            <person name="Johnston R.N."/>
            <person name="Liu G.-R."/>
            <person name="Liu S.-L."/>
        </authorList>
    </citation>
    <scope>NUCLEOTIDE SEQUENCE [LARGE SCALE GENOMIC DNA]</scope>
    <source>
        <strain>RKS4594</strain>
    </source>
</reference>
<dbReference type="EMBL" id="CP000857">
    <property type="protein sequence ID" value="ACN46738.1"/>
    <property type="molecule type" value="Genomic_DNA"/>
</dbReference>
<dbReference type="RefSeq" id="WP_000420603.1">
    <property type="nucleotide sequence ID" value="NC_012125.1"/>
</dbReference>
<dbReference type="SMR" id="C0Q893"/>
<dbReference type="KEGG" id="sei:SPC_2637"/>
<dbReference type="HOGENOM" id="CLU_017633_0_0_6"/>
<dbReference type="Proteomes" id="UP000001599">
    <property type="component" value="Chromosome"/>
</dbReference>
<dbReference type="GO" id="GO:0005737">
    <property type="term" value="C:cytoplasm"/>
    <property type="evidence" value="ECO:0007669"/>
    <property type="project" value="UniProtKB-UniRule"/>
</dbReference>
<dbReference type="GO" id="GO:0009295">
    <property type="term" value="C:nucleoid"/>
    <property type="evidence" value="ECO:0007669"/>
    <property type="project" value="UniProtKB-SubCell"/>
</dbReference>
<dbReference type="GO" id="GO:0003681">
    <property type="term" value="F:bent DNA binding"/>
    <property type="evidence" value="ECO:0007669"/>
    <property type="project" value="UniProtKB-UniRule"/>
</dbReference>
<dbReference type="GO" id="GO:0051082">
    <property type="term" value="F:unfolded protein binding"/>
    <property type="evidence" value="ECO:0007669"/>
    <property type="project" value="InterPro"/>
</dbReference>
<dbReference type="GO" id="GO:0051085">
    <property type="term" value="P:chaperone cofactor-dependent protein refolding"/>
    <property type="evidence" value="ECO:0007669"/>
    <property type="project" value="TreeGrafter"/>
</dbReference>
<dbReference type="GO" id="GO:0042026">
    <property type="term" value="P:protein refolding"/>
    <property type="evidence" value="ECO:0007669"/>
    <property type="project" value="TreeGrafter"/>
</dbReference>
<dbReference type="CDD" id="cd06257">
    <property type="entry name" value="DnaJ"/>
    <property type="match status" value="1"/>
</dbReference>
<dbReference type="CDD" id="cd10747">
    <property type="entry name" value="DnaJ_C"/>
    <property type="match status" value="1"/>
</dbReference>
<dbReference type="FunFam" id="1.10.287.110:FF:000013">
    <property type="entry name" value="Curved DNA-binding protein"/>
    <property type="match status" value="1"/>
</dbReference>
<dbReference type="FunFam" id="2.60.260.20:FF:000008">
    <property type="entry name" value="Curved DNA-binding protein"/>
    <property type="match status" value="1"/>
</dbReference>
<dbReference type="Gene3D" id="1.10.287.110">
    <property type="entry name" value="DnaJ domain"/>
    <property type="match status" value="1"/>
</dbReference>
<dbReference type="Gene3D" id="1.20.5.460">
    <property type="entry name" value="Single helix bin"/>
    <property type="match status" value="1"/>
</dbReference>
<dbReference type="Gene3D" id="2.60.260.20">
    <property type="entry name" value="Urease metallochaperone UreE, N-terminal domain"/>
    <property type="match status" value="2"/>
</dbReference>
<dbReference type="HAMAP" id="MF_01154">
    <property type="entry name" value="CbpA"/>
    <property type="match status" value="1"/>
</dbReference>
<dbReference type="InterPro" id="IPR023859">
    <property type="entry name" value="DNA-bd_curved-DNA"/>
</dbReference>
<dbReference type="InterPro" id="IPR002939">
    <property type="entry name" value="DnaJ_C"/>
</dbReference>
<dbReference type="InterPro" id="IPR001623">
    <property type="entry name" value="DnaJ_domain"/>
</dbReference>
<dbReference type="InterPro" id="IPR018253">
    <property type="entry name" value="DnaJ_domain_CS"/>
</dbReference>
<dbReference type="InterPro" id="IPR008971">
    <property type="entry name" value="HSP40/DnaJ_pept-bd"/>
</dbReference>
<dbReference type="InterPro" id="IPR036869">
    <property type="entry name" value="J_dom_sf"/>
</dbReference>
<dbReference type="NCBIfam" id="NF007618">
    <property type="entry name" value="PRK10266.1"/>
    <property type="match status" value="1"/>
</dbReference>
<dbReference type="PANTHER" id="PTHR43096">
    <property type="entry name" value="DNAJ HOMOLOG 1, MITOCHONDRIAL-RELATED"/>
    <property type="match status" value="1"/>
</dbReference>
<dbReference type="PANTHER" id="PTHR43096:SF52">
    <property type="entry name" value="DNAJ HOMOLOG 1, MITOCHONDRIAL-RELATED"/>
    <property type="match status" value="1"/>
</dbReference>
<dbReference type="Pfam" id="PF00226">
    <property type="entry name" value="DnaJ"/>
    <property type="match status" value="1"/>
</dbReference>
<dbReference type="Pfam" id="PF01556">
    <property type="entry name" value="DnaJ_C"/>
    <property type="match status" value="1"/>
</dbReference>
<dbReference type="PRINTS" id="PR00625">
    <property type="entry name" value="JDOMAIN"/>
</dbReference>
<dbReference type="SMART" id="SM00271">
    <property type="entry name" value="DnaJ"/>
    <property type="match status" value="1"/>
</dbReference>
<dbReference type="SUPFAM" id="SSF46565">
    <property type="entry name" value="Chaperone J-domain"/>
    <property type="match status" value="1"/>
</dbReference>
<dbReference type="SUPFAM" id="SSF49493">
    <property type="entry name" value="HSP40/DnaJ peptide-binding domain"/>
    <property type="match status" value="2"/>
</dbReference>
<dbReference type="PROSITE" id="PS00636">
    <property type="entry name" value="DNAJ_1"/>
    <property type="match status" value="1"/>
</dbReference>
<dbReference type="PROSITE" id="PS50076">
    <property type="entry name" value="DNAJ_2"/>
    <property type="match status" value="1"/>
</dbReference>
<comment type="function">
    <text evidence="1">DNA-binding protein that preferentially recognizes a curved DNA sequence. It is probably a functional analog of DnaJ; displays overlapping activities with DnaJ, but functions under different conditions, probably acting as a molecular chaperone in an adaptive response to environmental stresses other than heat shock. Lacks autonomous chaperone activity; binds native substrates and targets them for recognition by DnaK. Its activity is inhibited by the binding of CbpM.</text>
</comment>
<comment type="subcellular location">
    <subcellularLocation>
        <location evidence="1">Cytoplasm</location>
        <location evidence="1">Nucleoid</location>
    </subcellularLocation>
</comment>
<sequence>MELKDYYAIMGVKPTDDLKTIKTAYRRLARKYHPDVSKEPDAEARFKEVAEAWEVLSDEQRRAEYDQLWQHRNDPQFNRQFQQHEGQPYNAEDFDDIFSSIFGQHGRHSHHRHAARGHDIEIEVAVFLEETLEEHQRTISYSVPVYNAFGLVEREIPKTLNVKIPAGVSNGQRIRLKGQGTPGENGGPNGDLWLVIHIAPHPLFDIVNQDLEVVLPLAPWEAALGAKVSVPTLKERILLTIPPGSQAGQRLRIKGKGLASKKHTGDLYAIIKIVMPPKPDEKTAALWQQLADAQSSFDPRQQWGKA</sequence>
<feature type="chain" id="PRO_1000164289" description="Curved DNA-binding protein">
    <location>
        <begin position="1"/>
        <end position="306"/>
    </location>
</feature>
<feature type="domain" description="J" evidence="1">
    <location>
        <begin position="5"/>
        <end position="69"/>
    </location>
</feature>
<protein>
    <recommendedName>
        <fullName evidence="1">Curved DNA-binding protein</fullName>
    </recommendedName>
</protein>
<accession>C0Q893</accession>
<name>CBPA_SALPC</name>